<accession>Q5HT08</accession>
<sequence length="115" mass="12631">MRVGCDIIAISRIEKIHSRHGKNFLDKFLSPKEQILIKNPATLAGLWAAKEAASKALGVGICELCSFFDIEISKDEKNAPKLKYSQKITKDFNITQTSLSISHDNGFAIAIVAVV</sequence>
<organism>
    <name type="scientific">Campylobacter jejuni (strain RM1221)</name>
    <dbReference type="NCBI Taxonomy" id="195099"/>
    <lineage>
        <taxon>Bacteria</taxon>
        <taxon>Pseudomonadati</taxon>
        <taxon>Campylobacterota</taxon>
        <taxon>Epsilonproteobacteria</taxon>
        <taxon>Campylobacterales</taxon>
        <taxon>Campylobacteraceae</taxon>
        <taxon>Campylobacter</taxon>
    </lineage>
</organism>
<name>ACPS_CAMJR</name>
<gene>
    <name evidence="1" type="primary">acpS</name>
    <name type="ordered locus">CJE1596</name>
</gene>
<evidence type="ECO:0000255" key="1">
    <source>
        <dbReference type="HAMAP-Rule" id="MF_00101"/>
    </source>
</evidence>
<proteinExistence type="inferred from homology"/>
<keyword id="KW-0963">Cytoplasm</keyword>
<keyword id="KW-0275">Fatty acid biosynthesis</keyword>
<keyword id="KW-0276">Fatty acid metabolism</keyword>
<keyword id="KW-0444">Lipid biosynthesis</keyword>
<keyword id="KW-0443">Lipid metabolism</keyword>
<keyword id="KW-0460">Magnesium</keyword>
<keyword id="KW-0479">Metal-binding</keyword>
<keyword id="KW-0808">Transferase</keyword>
<comment type="function">
    <text evidence="1">Transfers the 4'-phosphopantetheine moiety from coenzyme A to a Ser of acyl-carrier-protein.</text>
</comment>
<comment type="catalytic activity">
    <reaction evidence="1">
        <text>apo-[ACP] + CoA = holo-[ACP] + adenosine 3',5'-bisphosphate + H(+)</text>
        <dbReference type="Rhea" id="RHEA:12068"/>
        <dbReference type="Rhea" id="RHEA-COMP:9685"/>
        <dbReference type="Rhea" id="RHEA-COMP:9690"/>
        <dbReference type="ChEBI" id="CHEBI:15378"/>
        <dbReference type="ChEBI" id="CHEBI:29999"/>
        <dbReference type="ChEBI" id="CHEBI:57287"/>
        <dbReference type="ChEBI" id="CHEBI:58343"/>
        <dbReference type="ChEBI" id="CHEBI:64479"/>
        <dbReference type="EC" id="2.7.8.7"/>
    </reaction>
</comment>
<comment type="cofactor">
    <cofactor evidence="1">
        <name>Mg(2+)</name>
        <dbReference type="ChEBI" id="CHEBI:18420"/>
    </cofactor>
</comment>
<comment type="subcellular location">
    <subcellularLocation>
        <location evidence="1">Cytoplasm</location>
    </subcellularLocation>
</comment>
<comment type="similarity">
    <text evidence="1">Belongs to the P-Pant transferase superfamily. AcpS family.</text>
</comment>
<feature type="chain" id="PRO_0000175627" description="Holo-[acyl-carrier-protein] synthase">
    <location>
        <begin position="1"/>
        <end position="115"/>
    </location>
</feature>
<feature type="binding site" evidence="1">
    <location>
        <position position="6"/>
    </location>
    <ligand>
        <name>Mg(2+)</name>
        <dbReference type="ChEBI" id="CHEBI:18420"/>
    </ligand>
</feature>
<feature type="binding site" evidence="1">
    <location>
        <position position="51"/>
    </location>
    <ligand>
        <name>Mg(2+)</name>
        <dbReference type="ChEBI" id="CHEBI:18420"/>
    </ligand>
</feature>
<dbReference type="EC" id="2.7.8.7" evidence="1"/>
<dbReference type="EMBL" id="CP000025">
    <property type="protein sequence ID" value="AAW36029.1"/>
    <property type="molecule type" value="Genomic_DNA"/>
</dbReference>
<dbReference type="RefSeq" id="WP_002780441.1">
    <property type="nucleotide sequence ID" value="NC_003912.7"/>
</dbReference>
<dbReference type="SMR" id="Q5HT08"/>
<dbReference type="KEGG" id="cjr:CJE1596"/>
<dbReference type="HOGENOM" id="CLU_089696_0_2_7"/>
<dbReference type="GO" id="GO:0005737">
    <property type="term" value="C:cytoplasm"/>
    <property type="evidence" value="ECO:0007669"/>
    <property type="project" value="UniProtKB-SubCell"/>
</dbReference>
<dbReference type="GO" id="GO:0008897">
    <property type="term" value="F:holo-[acyl-carrier-protein] synthase activity"/>
    <property type="evidence" value="ECO:0007669"/>
    <property type="project" value="UniProtKB-UniRule"/>
</dbReference>
<dbReference type="GO" id="GO:0000287">
    <property type="term" value="F:magnesium ion binding"/>
    <property type="evidence" value="ECO:0007669"/>
    <property type="project" value="UniProtKB-UniRule"/>
</dbReference>
<dbReference type="GO" id="GO:0006633">
    <property type="term" value="P:fatty acid biosynthetic process"/>
    <property type="evidence" value="ECO:0007669"/>
    <property type="project" value="UniProtKB-UniRule"/>
</dbReference>
<dbReference type="Gene3D" id="3.90.470.20">
    <property type="entry name" value="4'-phosphopantetheinyl transferase domain"/>
    <property type="match status" value="1"/>
</dbReference>
<dbReference type="HAMAP" id="MF_00101">
    <property type="entry name" value="AcpS"/>
    <property type="match status" value="1"/>
</dbReference>
<dbReference type="InterPro" id="IPR008278">
    <property type="entry name" value="4-PPantetheinyl_Trfase_dom"/>
</dbReference>
<dbReference type="InterPro" id="IPR037143">
    <property type="entry name" value="4-PPantetheinyl_Trfase_dom_sf"/>
</dbReference>
<dbReference type="InterPro" id="IPR002582">
    <property type="entry name" value="ACPS"/>
</dbReference>
<dbReference type="InterPro" id="IPR004568">
    <property type="entry name" value="Ppantetheine-prot_Trfase_dom"/>
</dbReference>
<dbReference type="NCBIfam" id="TIGR00516">
    <property type="entry name" value="acpS"/>
    <property type="match status" value="1"/>
</dbReference>
<dbReference type="NCBIfam" id="TIGR00556">
    <property type="entry name" value="pantethn_trn"/>
    <property type="match status" value="1"/>
</dbReference>
<dbReference type="Pfam" id="PF01648">
    <property type="entry name" value="ACPS"/>
    <property type="match status" value="1"/>
</dbReference>
<dbReference type="SUPFAM" id="SSF56214">
    <property type="entry name" value="4'-phosphopantetheinyl transferase"/>
    <property type="match status" value="1"/>
</dbReference>
<reference key="1">
    <citation type="journal article" date="2005" name="PLoS Biol.">
        <title>Major structural differences and novel potential virulence mechanisms from the genomes of multiple Campylobacter species.</title>
        <authorList>
            <person name="Fouts D.E."/>
            <person name="Mongodin E.F."/>
            <person name="Mandrell R.E."/>
            <person name="Miller W.G."/>
            <person name="Rasko D.A."/>
            <person name="Ravel J."/>
            <person name="Brinkac L.M."/>
            <person name="DeBoy R.T."/>
            <person name="Parker C.T."/>
            <person name="Daugherty S.C."/>
            <person name="Dodson R.J."/>
            <person name="Durkin A.S."/>
            <person name="Madupu R."/>
            <person name="Sullivan S.A."/>
            <person name="Shetty J.U."/>
            <person name="Ayodeji M.A."/>
            <person name="Shvartsbeyn A."/>
            <person name="Schatz M.C."/>
            <person name="Badger J.H."/>
            <person name="Fraser C.M."/>
            <person name="Nelson K.E."/>
        </authorList>
    </citation>
    <scope>NUCLEOTIDE SEQUENCE [LARGE SCALE GENOMIC DNA]</scope>
    <source>
        <strain>RM1221</strain>
    </source>
</reference>
<protein>
    <recommendedName>
        <fullName evidence="1">Holo-[acyl-carrier-protein] synthase</fullName>
        <shortName evidence="1">Holo-ACP synthase</shortName>
        <ecNumber evidence="1">2.7.8.7</ecNumber>
    </recommendedName>
    <alternativeName>
        <fullName evidence="1">4'-phosphopantetheinyl transferase AcpS</fullName>
    </alternativeName>
</protein>